<organism>
    <name type="scientific">Yersinia pseudotuberculosis serotype IB (strain PB1/+)</name>
    <dbReference type="NCBI Taxonomy" id="502801"/>
    <lineage>
        <taxon>Bacteria</taxon>
        <taxon>Pseudomonadati</taxon>
        <taxon>Pseudomonadota</taxon>
        <taxon>Gammaproteobacteria</taxon>
        <taxon>Enterobacterales</taxon>
        <taxon>Yersiniaceae</taxon>
        <taxon>Yersinia</taxon>
    </lineage>
</organism>
<accession>B2JYN7</accession>
<gene>
    <name evidence="1" type="primary">coaD</name>
    <name type="ordered locus">YPTS_0052</name>
</gene>
<sequence length="159" mass="17669">MITKAIYPGTFDPITNGHLDLVTRASAMFSHVILAIADSSSKKPMFTLDERVALAKKVTAPLKNVEVLGFSELMAEFAKKHNANILVRGLRSVSDFEYEWQLANMNRHLMPKLESVFLMPSEKWSFISSSLVKEVARHGGDITPFLPKPVTKALLAKLA</sequence>
<name>COAD_YERPB</name>
<reference key="1">
    <citation type="submission" date="2008-04" db="EMBL/GenBank/DDBJ databases">
        <title>Complete sequence of Yersinia pseudotuberculosis PB1/+.</title>
        <authorList>
            <person name="Copeland A."/>
            <person name="Lucas S."/>
            <person name="Lapidus A."/>
            <person name="Glavina del Rio T."/>
            <person name="Dalin E."/>
            <person name="Tice H."/>
            <person name="Bruce D."/>
            <person name="Goodwin L."/>
            <person name="Pitluck S."/>
            <person name="Munk A.C."/>
            <person name="Brettin T."/>
            <person name="Detter J.C."/>
            <person name="Han C."/>
            <person name="Tapia R."/>
            <person name="Schmutz J."/>
            <person name="Larimer F."/>
            <person name="Land M."/>
            <person name="Hauser L."/>
            <person name="Challacombe J.F."/>
            <person name="Green L."/>
            <person name="Lindler L.E."/>
            <person name="Nikolich M.P."/>
            <person name="Richardson P."/>
        </authorList>
    </citation>
    <scope>NUCLEOTIDE SEQUENCE [LARGE SCALE GENOMIC DNA]</scope>
    <source>
        <strain>PB1/+</strain>
    </source>
</reference>
<proteinExistence type="inferred from homology"/>
<protein>
    <recommendedName>
        <fullName evidence="1">Phosphopantetheine adenylyltransferase</fullName>
        <ecNumber evidence="1">2.7.7.3</ecNumber>
    </recommendedName>
    <alternativeName>
        <fullName evidence="1">Dephospho-CoA pyrophosphorylase</fullName>
    </alternativeName>
    <alternativeName>
        <fullName evidence="1">Pantetheine-phosphate adenylyltransferase</fullName>
        <shortName evidence="1">PPAT</shortName>
    </alternativeName>
</protein>
<feature type="chain" id="PRO_1000096862" description="Phosphopantetheine adenylyltransferase">
    <location>
        <begin position="1"/>
        <end position="159"/>
    </location>
</feature>
<feature type="binding site" evidence="1">
    <location>
        <begin position="10"/>
        <end position="11"/>
    </location>
    <ligand>
        <name>ATP</name>
        <dbReference type="ChEBI" id="CHEBI:30616"/>
    </ligand>
</feature>
<feature type="binding site" evidence="1">
    <location>
        <position position="10"/>
    </location>
    <ligand>
        <name>substrate</name>
    </ligand>
</feature>
<feature type="binding site" evidence="1">
    <location>
        <position position="18"/>
    </location>
    <ligand>
        <name>ATP</name>
        <dbReference type="ChEBI" id="CHEBI:30616"/>
    </ligand>
</feature>
<feature type="binding site" evidence="1">
    <location>
        <position position="42"/>
    </location>
    <ligand>
        <name>substrate</name>
    </ligand>
</feature>
<feature type="binding site" evidence="1">
    <location>
        <position position="74"/>
    </location>
    <ligand>
        <name>substrate</name>
    </ligand>
</feature>
<feature type="binding site" evidence="1">
    <location>
        <position position="88"/>
    </location>
    <ligand>
        <name>substrate</name>
    </ligand>
</feature>
<feature type="binding site" evidence="1">
    <location>
        <begin position="89"/>
        <end position="91"/>
    </location>
    <ligand>
        <name>ATP</name>
        <dbReference type="ChEBI" id="CHEBI:30616"/>
    </ligand>
</feature>
<feature type="binding site" evidence="1">
    <location>
        <position position="99"/>
    </location>
    <ligand>
        <name>ATP</name>
        <dbReference type="ChEBI" id="CHEBI:30616"/>
    </ligand>
</feature>
<feature type="binding site" evidence="1">
    <location>
        <begin position="124"/>
        <end position="130"/>
    </location>
    <ligand>
        <name>ATP</name>
        <dbReference type="ChEBI" id="CHEBI:30616"/>
    </ligand>
</feature>
<feature type="site" description="Transition state stabilizer" evidence="1">
    <location>
        <position position="18"/>
    </location>
</feature>
<keyword id="KW-0067">ATP-binding</keyword>
<keyword id="KW-0173">Coenzyme A biosynthesis</keyword>
<keyword id="KW-0963">Cytoplasm</keyword>
<keyword id="KW-0460">Magnesium</keyword>
<keyword id="KW-0547">Nucleotide-binding</keyword>
<keyword id="KW-0548">Nucleotidyltransferase</keyword>
<keyword id="KW-0808">Transferase</keyword>
<comment type="function">
    <text evidence="1">Reversibly transfers an adenylyl group from ATP to 4'-phosphopantetheine, yielding dephospho-CoA (dPCoA) and pyrophosphate.</text>
</comment>
<comment type="catalytic activity">
    <reaction evidence="1">
        <text>(R)-4'-phosphopantetheine + ATP + H(+) = 3'-dephospho-CoA + diphosphate</text>
        <dbReference type="Rhea" id="RHEA:19801"/>
        <dbReference type="ChEBI" id="CHEBI:15378"/>
        <dbReference type="ChEBI" id="CHEBI:30616"/>
        <dbReference type="ChEBI" id="CHEBI:33019"/>
        <dbReference type="ChEBI" id="CHEBI:57328"/>
        <dbReference type="ChEBI" id="CHEBI:61723"/>
        <dbReference type="EC" id="2.7.7.3"/>
    </reaction>
</comment>
<comment type="cofactor">
    <cofactor evidence="1">
        <name>Mg(2+)</name>
        <dbReference type="ChEBI" id="CHEBI:18420"/>
    </cofactor>
</comment>
<comment type="pathway">
    <text evidence="1">Cofactor biosynthesis; coenzyme A biosynthesis; CoA from (R)-pantothenate: step 4/5.</text>
</comment>
<comment type="subunit">
    <text evidence="1">Homohexamer.</text>
</comment>
<comment type="subcellular location">
    <subcellularLocation>
        <location evidence="1">Cytoplasm</location>
    </subcellularLocation>
</comment>
<comment type="similarity">
    <text evidence="1">Belongs to the bacterial CoaD family.</text>
</comment>
<evidence type="ECO:0000255" key="1">
    <source>
        <dbReference type="HAMAP-Rule" id="MF_00151"/>
    </source>
</evidence>
<dbReference type="EC" id="2.7.7.3" evidence="1"/>
<dbReference type="EMBL" id="CP001048">
    <property type="protein sequence ID" value="ACC87051.1"/>
    <property type="molecule type" value="Genomic_DNA"/>
</dbReference>
<dbReference type="RefSeq" id="WP_012104267.1">
    <property type="nucleotide sequence ID" value="NZ_CP009780.1"/>
</dbReference>
<dbReference type="SMR" id="B2JYN7"/>
<dbReference type="GeneID" id="49787980"/>
<dbReference type="KEGG" id="ypb:YPTS_0052"/>
<dbReference type="PATRIC" id="fig|502801.10.peg.3728"/>
<dbReference type="UniPathway" id="UPA00241">
    <property type="reaction ID" value="UER00355"/>
</dbReference>
<dbReference type="GO" id="GO:0005737">
    <property type="term" value="C:cytoplasm"/>
    <property type="evidence" value="ECO:0007669"/>
    <property type="project" value="UniProtKB-SubCell"/>
</dbReference>
<dbReference type="GO" id="GO:0005524">
    <property type="term" value="F:ATP binding"/>
    <property type="evidence" value="ECO:0007669"/>
    <property type="project" value="UniProtKB-KW"/>
</dbReference>
<dbReference type="GO" id="GO:0004595">
    <property type="term" value="F:pantetheine-phosphate adenylyltransferase activity"/>
    <property type="evidence" value="ECO:0007669"/>
    <property type="project" value="UniProtKB-UniRule"/>
</dbReference>
<dbReference type="GO" id="GO:0015937">
    <property type="term" value="P:coenzyme A biosynthetic process"/>
    <property type="evidence" value="ECO:0007669"/>
    <property type="project" value="UniProtKB-UniRule"/>
</dbReference>
<dbReference type="CDD" id="cd02163">
    <property type="entry name" value="PPAT"/>
    <property type="match status" value="1"/>
</dbReference>
<dbReference type="FunFam" id="3.40.50.620:FF:000012">
    <property type="entry name" value="Phosphopantetheine adenylyltransferase"/>
    <property type="match status" value="1"/>
</dbReference>
<dbReference type="Gene3D" id="3.40.50.620">
    <property type="entry name" value="HUPs"/>
    <property type="match status" value="1"/>
</dbReference>
<dbReference type="HAMAP" id="MF_00151">
    <property type="entry name" value="PPAT_bact"/>
    <property type="match status" value="1"/>
</dbReference>
<dbReference type="InterPro" id="IPR004821">
    <property type="entry name" value="Cyt_trans-like"/>
</dbReference>
<dbReference type="InterPro" id="IPR001980">
    <property type="entry name" value="PPAT"/>
</dbReference>
<dbReference type="InterPro" id="IPR014729">
    <property type="entry name" value="Rossmann-like_a/b/a_fold"/>
</dbReference>
<dbReference type="NCBIfam" id="TIGR01510">
    <property type="entry name" value="coaD_prev_kdtB"/>
    <property type="match status" value="1"/>
</dbReference>
<dbReference type="NCBIfam" id="TIGR00125">
    <property type="entry name" value="cyt_tran_rel"/>
    <property type="match status" value="1"/>
</dbReference>
<dbReference type="PANTHER" id="PTHR21342">
    <property type="entry name" value="PHOSPHOPANTETHEINE ADENYLYLTRANSFERASE"/>
    <property type="match status" value="1"/>
</dbReference>
<dbReference type="PANTHER" id="PTHR21342:SF1">
    <property type="entry name" value="PHOSPHOPANTETHEINE ADENYLYLTRANSFERASE"/>
    <property type="match status" value="1"/>
</dbReference>
<dbReference type="Pfam" id="PF01467">
    <property type="entry name" value="CTP_transf_like"/>
    <property type="match status" value="1"/>
</dbReference>
<dbReference type="PRINTS" id="PR01020">
    <property type="entry name" value="LPSBIOSNTHSS"/>
</dbReference>
<dbReference type="SUPFAM" id="SSF52374">
    <property type="entry name" value="Nucleotidylyl transferase"/>
    <property type="match status" value="1"/>
</dbReference>